<evidence type="ECO:0000250" key="1"/>
<evidence type="ECO:0000255" key="2">
    <source>
        <dbReference type="PROSITE-ProRule" id="PRU01059"/>
    </source>
</evidence>
<keyword id="KW-0046">Antibiotic resistance</keyword>
<keyword id="KW-0342">GTP-binding</keyword>
<keyword id="KW-0547">Nucleotide-binding</keyword>
<keyword id="KW-0648">Protein biosynthesis</keyword>
<sequence>MKIINLGILAHVDAGKTTLTESLLYTSGAIAEPGSVDKGTTRTDTMNLERQRGITIQTAVTSFQWEDVKVNIIDTPGHMDFLAEVYRSLSVLDGAVLLVSAKDGIQAQTRILFHALQTMKIPTIFFINKIDQEGIDLPMVYREMKAKLSSEIIVKQKVGQHPHINVTDNDDMEQWDTVIMGNDELLEKYMSGKPFKMSELEQEENRRFQNGTLFPVYHGSAKNNLGIRQLIEVIASKFYSSTPEGQSELCGQVFKIEYSEKRRRFVYVRIYSGTLHLRDVIRISEKEKIKITEMCVPTNGELYSSDTACSGDIVILPNDVLQLNSILGNEILLPQRKFIENPLPMLQTTIAVKKSEQREILLGALTEISDGDPLLKYYVDTTTHEIILSFLGNVQMEVICAILEEKYHVEAEIKEPTVIYMERPLRKAEYTIHIEVPPNPFWASVGLSIEPLPIGSGVQYESRVSLGYLNQSFQNAVMEGVLYGCEQGLYGWKVTDCKICFEYGLYYSPVSTPADFRLLSPIVLEQALKKAGTELLEPYLHFEIYAPQEYLSRAYHDAPRYCADIVSTQIKNDEVILKGEIPARCIQEYRNDLTYFTNGQGVCLTELKGYQPAIGKFICQPRRPNSRIDKVRHMFHKLA</sequence>
<protein>
    <recommendedName>
        <fullName>Tetracycline resistance protein TetO</fullName>
        <shortName>Tet(O)</shortName>
    </recommendedName>
</protein>
<gene>
    <name type="primary">tetO</name>
    <name type="synonym">tet(O)</name>
</gene>
<feature type="chain" id="PRO_0000091506" description="Tetracycline resistance protein TetO">
    <location>
        <begin position="1"/>
        <end position="639"/>
    </location>
</feature>
<feature type="domain" description="tr-type G" evidence="2">
    <location>
        <begin position="1"/>
        <end position="244"/>
    </location>
</feature>
<feature type="binding site" evidence="1">
    <location>
        <begin position="10"/>
        <end position="17"/>
    </location>
    <ligand>
        <name>GTP</name>
        <dbReference type="ChEBI" id="CHEBI:37565"/>
    </ligand>
</feature>
<feature type="binding site" evidence="1">
    <location>
        <begin position="74"/>
        <end position="78"/>
    </location>
    <ligand>
        <name>GTP</name>
        <dbReference type="ChEBI" id="CHEBI:37565"/>
    </ligand>
</feature>
<feature type="binding site" evidence="1">
    <location>
        <begin position="128"/>
        <end position="131"/>
    </location>
    <ligand>
        <name>GTP</name>
        <dbReference type="ChEBI" id="CHEBI:37565"/>
    </ligand>
</feature>
<reference key="1">
    <citation type="journal article" date="1988" name="J. Bacteriol.">
        <title>Nucleotide sequence analysis of tetracycline resistance gene tetO from Streptococcus mutans DL5.</title>
        <authorList>
            <person name="Leblanc D.J."/>
            <person name="Lee L.N."/>
            <person name="Titmas B.M."/>
            <person name="Smith C.J."/>
            <person name="Tenover F.C."/>
        </authorList>
    </citation>
    <scope>NUCLEOTIDE SEQUENCE [GENOMIC DNA]</scope>
    <source>
        <strain>DL5</strain>
    </source>
</reference>
<comment type="function">
    <text>Abolishes the inhibitory effect of tetracyclin on protein synthesis by a non-covalent modification of the ribosomes.</text>
</comment>
<comment type="similarity">
    <text evidence="2">Belongs to the TRAFAC class translation factor GTPase superfamily. Classic translation factor GTPase family. TetM/TetO subfamily.</text>
</comment>
<organism>
    <name type="scientific">Streptococcus mutans</name>
    <dbReference type="NCBI Taxonomy" id="1309"/>
    <lineage>
        <taxon>Bacteria</taxon>
        <taxon>Bacillati</taxon>
        <taxon>Bacillota</taxon>
        <taxon>Bacilli</taxon>
        <taxon>Lactobacillales</taxon>
        <taxon>Streptococcaceae</taxon>
        <taxon>Streptococcus</taxon>
    </lineage>
</organism>
<name>TETO_STRMG</name>
<accession>P20174</accession>
<dbReference type="EMBL" id="M20925">
    <property type="protein sequence ID" value="AAA26679.1"/>
    <property type="molecule type" value="Genomic_DNA"/>
</dbReference>
<dbReference type="PIR" id="A31098">
    <property type="entry name" value="A31098"/>
</dbReference>
<dbReference type="RefSeq" id="WP_044666383.1">
    <property type="nucleotide sequence ID" value="NG_048254.1"/>
</dbReference>
<dbReference type="SMR" id="P20174"/>
<dbReference type="GO" id="GO:0005525">
    <property type="term" value="F:GTP binding"/>
    <property type="evidence" value="ECO:0007669"/>
    <property type="project" value="UniProtKB-KW"/>
</dbReference>
<dbReference type="GO" id="GO:0003924">
    <property type="term" value="F:GTPase activity"/>
    <property type="evidence" value="ECO:0007669"/>
    <property type="project" value="InterPro"/>
</dbReference>
<dbReference type="GO" id="GO:0046677">
    <property type="term" value="P:response to antibiotic"/>
    <property type="evidence" value="ECO:0007669"/>
    <property type="project" value="UniProtKB-KW"/>
</dbReference>
<dbReference type="GO" id="GO:0032790">
    <property type="term" value="P:ribosome disassembly"/>
    <property type="evidence" value="ECO:0007669"/>
    <property type="project" value="TreeGrafter"/>
</dbReference>
<dbReference type="GO" id="GO:0006412">
    <property type="term" value="P:translation"/>
    <property type="evidence" value="ECO:0007669"/>
    <property type="project" value="UniProtKB-KW"/>
</dbReference>
<dbReference type="CDD" id="cd03711">
    <property type="entry name" value="Tet_C"/>
    <property type="match status" value="1"/>
</dbReference>
<dbReference type="CDD" id="cd03690">
    <property type="entry name" value="Tet_II"/>
    <property type="match status" value="1"/>
</dbReference>
<dbReference type="CDD" id="cd16258">
    <property type="entry name" value="Tet_III"/>
    <property type="match status" value="1"/>
</dbReference>
<dbReference type="CDD" id="cd01684">
    <property type="entry name" value="Tet_like_IV"/>
    <property type="match status" value="1"/>
</dbReference>
<dbReference type="CDD" id="cd04168">
    <property type="entry name" value="TetM_like"/>
    <property type="match status" value="1"/>
</dbReference>
<dbReference type="Gene3D" id="3.30.230.10">
    <property type="match status" value="1"/>
</dbReference>
<dbReference type="Gene3D" id="3.30.70.240">
    <property type="match status" value="1"/>
</dbReference>
<dbReference type="Gene3D" id="3.30.70.870">
    <property type="entry name" value="Elongation Factor G (Translational Gtpase), domain 3"/>
    <property type="match status" value="1"/>
</dbReference>
<dbReference type="Gene3D" id="3.40.50.300">
    <property type="entry name" value="P-loop containing nucleotide triphosphate hydrolases"/>
    <property type="match status" value="1"/>
</dbReference>
<dbReference type="Gene3D" id="2.40.30.10">
    <property type="entry name" value="Translation factors"/>
    <property type="match status" value="1"/>
</dbReference>
<dbReference type="InterPro" id="IPR053905">
    <property type="entry name" value="EF-G-like_DII"/>
</dbReference>
<dbReference type="InterPro" id="IPR041095">
    <property type="entry name" value="EFG_II"/>
</dbReference>
<dbReference type="InterPro" id="IPR035647">
    <property type="entry name" value="EFG_III/V"/>
</dbReference>
<dbReference type="InterPro" id="IPR000640">
    <property type="entry name" value="EFG_V-like"/>
</dbReference>
<dbReference type="InterPro" id="IPR031157">
    <property type="entry name" value="G_TR_CS"/>
</dbReference>
<dbReference type="InterPro" id="IPR027417">
    <property type="entry name" value="P-loop_NTPase"/>
</dbReference>
<dbReference type="InterPro" id="IPR020568">
    <property type="entry name" value="Ribosomal_Su5_D2-typ_SF"/>
</dbReference>
<dbReference type="InterPro" id="IPR014721">
    <property type="entry name" value="Ribsml_uS5_D2-typ_fold_subgr"/>
</dbReference>
<dbReference type="InterPro" id="IPR005225">
    <property type="entry name" value="Small_GTP-bd"/>
</dbReference>
<dbReference type="InterPro" id="IPR000795">
    <property type="entry name" value="T_Tr_GTP-bd_dom"/>
</dbReference>
<dbReference type="InterPro" id="IPR035650">
    <property type="entry name" value="Tet_C"/>
</dbReference>
<dbReference type="InterPro" id="IPR009000">
    <property type="entry name" value="Transl_B-barrel_sf"/>
</dbReference>
<dbReference type="InterPro" id="IPR005517">
    <property type="entry name" value="Transl_elong_EFG/EF2_IV"/>
</dbReference>
<dbReference type="NCBIfam" id="TIGR00231">
    <property type="entry name" value="small_GTP"/>
    <property type="match status" value="1"/>
</dbReference>
<dbReference type="NCBIfam" id="NF012153">
    <property type="entry name" value="tet_protect"/>
    <property type="match status" value="1"/>
</dbReference>
<dbReference type="NCBIfam" id="NF033148">
    <property type="entry name" value="tet_protect_M_W"/>
    <property type="match status" value="1"/>
</dbReference>
<dbReference type="PANTHER" id="PTHR43261:SF1">
    <property type="entry name" value="RIBOSOME-RELEASING FACTOR 2, MITOCHONDRIAL"/>
    <property type="match status" value="1"/>
</dbReference>
<dbReference type="PANTHER" id="PTHR43261">
    <property type="entry name" value="TRANSLATION ELONGATION FACTOR G-RELATED"/>
    <property type="match status" value="1"/>
</dbReference>
<dbReference type="Pfam" id="PF22042">
    <property type="entry name" value="EF-G_D2"/>
    <property type="match status" value="1"/>
</dbReference>
<dbReference type="Pfam" id="PF00679">
    <property type="entry name" value="EFG_C"/>
    <property type="match status" value="1"/>
</dbReference>
<dbReference type="Pfam" id="PF14492">
    <property type="entry name" value="EFG_III"/>
    <property type="match status" value="1"/>
</dbReference>
<dbReference type="Pfam" id="PF03764">
    <property type="entry name" value="EFG_IV"/>
    <property type="match status" value="1"/>
</dbReference>
<dbReference type="Pfam" id="PF00009">
    <property type="entry name" value="GTP_EFTU"/>
    <property type="match status" value="1"/>
</dbReference>
<dbReference type="PRINTS" id="PR00315">
    <property type="entry name" value="ELONGATNFCT"/>
</dbReference>
<dbReference type="PRINTS" id="PR01037">
    <property type="entry name" value="TCRTETOQM"/>
</dbReference>
<dbReference type="SMART" id="SM00889">
    <property type="entry name" value="EFG_IV"/>
    <property type="match status" value="1"/>
</dbReference>
<dbReference type="SUPFAM" id="SSF54980">
    <property type="entry name" value="EF-G C-terminal domain-like"/>
    <property type="match status" value="2"/>
</dbReference>
<dbReference type="SUPFAM" id="SSF52540">
    <property type="entry name" value="P-loop containing nucleoside triphosphate hydrolases"/>
    <property type="match status" value="1"/>
</dbReference>
<dbReference type="SUPFAM" id="SSF54211">
    <property type="entry name" value="Ribosomal protein S5 domain 2-like"/>
    <property type="match status" value="1"/>
</dbReference>
<dbReference type="SUPFAM" id="SSF50447">
    <property type="entry name" value="Translation proteins"/>
    <property type="match status" value="1"/>
</dbReference>
<dbReference type="PROSITE" id="PS00301">
    <property type="entry name" value="G_TR_1"/>
    <property type="match status" value="1"/>
</dbReference>
<dbReference type="PROSITE" id="PS51722">
    <property type="entry name" value="G_TR_2"/>
    <property type="match status" value="1"/>
</dbReference>
<proteinExistence type="inferred from homology"/>